<sequence length="92" mass="10778">MIFNSEELIIISDLGIVWVVSIIINDAKGKLEKKLEERLKELEKLEELEKELEKIENELRLMRGVPLDLTDIKGKLDELKAEIAWLEYKVDK</sequence>
<reference key="1">
    <citation type="journal article" date="1991" name="Virology">
        <title>Complete nucleotide sequence of the virus SSV1 of the archaebacterium Sulfolobus shibatae.</title>
        <authorList>
            <person name="Palm P."/>
            <person name="Schleper C."/>
            <person name="Grampp B."/>
            <person name="Yeats S."/>
            <person name="McWilliam P."/>
            <person name="Reiter W.-D."/>
            <person name="Zillig W."/>
        </authorList>
    </citation>
    <scope>NUCLEOTIDE SEQUENCE [GENOMIC DNA]</scope>
</reference>
<proteinExistence type="predicted"/>
<feature type="chain" id="PRO_0000223013" description="Uncharacterized protein F-92">
    <location>
        <begin position="1"/>
        <end position="92"/>
    </location>
</feature>
<keyword id="KW-1185">Reference proteome</keyword>
<dbReference type="EMBL" id="X07234">
    <property type="protein sequence ID" value="CAA30213.1"/>
    <property type="molecule type" value="Genomic_DNA"/>
</dbReference>
<dbReference type="PIR" id="S03214">
    <property type="entry name" value="S03214"/>
</dbReference>
<dbReference type="RefSeq" id="NP_039780.1">
    <property type="nucleotide sequence ID" value="NC_001338.1"/>
</dbReference>
<dbReference type="SMR" id="P20221"/>
<dbReference type="KEGG" id="vg:2559633"/>
<dbReference type="Proteomes" id="UP000000854">
    <property type="component" value="Genome"/>
</dbReference>
<name>F92_SSV1</name>
<gene>
    <name type="ORF">f92</name>
</gene>
<accession>P20221</accession>
<organism>
    <name type="scientific">Sulfolobus spindle-shape virus 1</name>
    <name type="common">SSV1</name>
    <dbReference type="NCBI Taxonomy" id="244589"/>
    <lineage>
        <taxon>Viruses</taxon>
        <taxon>Viruses incertae sedis</taxon>
        <taxon>Fuselloviridae</taxon>
        <taxon>Alphafusellovirus</taxon>
    </lineage>
</organism>
<protein>
    <recommendedName>
        <fullName>Uncharacterized protein F-92</fullName>
    </recommendedName>
</protein>
<organismHost>
    <name type="scientific">Saccharolobus solfataricus</name>
    <name type="common">Sulfolobus solfataricus</name>
    <dbReference type="NCBI Taxonomy" id="2287"/>
</organismHost>